<reference key="1">
    <citation type="journal article" date="2008" name="DNA Res.">
        <title>Comparative genome analysis of Lactobacillus reuteri and Lactobacillus fermentum reveal a genomic island for reuterin and cobalamin production.</title>
        <authorList>
            <person name="Morita H."/>
            <person name="Toh H."/>
            <person name="Fukuda S."/>
            <person name="Horikawa H."/>
            <person name="Oshima K."/>
            <person name="Suzuki T."/>
            <person name="Murakami M."/>
            <person name="Hisamatsu S."/>
            <person name="Kato Y."/>
            <person name="Takizawa T."/>
            <person name="Fukuoka H."/>
            <person name="Yoshimura T."/>
            <person name="Itoh K."/>
            <person name="O'Sullivan D.J."/>
            <person name="McKay L.L."/>
            <person name="Ohno H."/>
            <person name="Kikuchi J."/>
            <person name="Masaoka T."/>
            <person name="Hattori M."/>
        </authorList>
    </citation>
    <scope>NUCLEOTIDE SEQUENCE [LARGE SCALE GENOMIC DNA]</scope>
    <source>
        <strain>NBRC 3956 / LMG 18251</strain>
    </source>
</reference>
<keyword id="KW-1185">Reference proteome</keyword>
<keyword id="KW-0694">RNA-binding</keyword>
<keyword id="KW-0804">Transcription</keyword>
<keyword id="KW-0889">Transcription antitermination</keyword>
<keyword id="KW-0805">Transcription regulation</keyword>
<feature type="chain" id="PRO_1000092562" description="Transcription antitermination protein NusB">
    <location>
        <begin position="1"/>
        <end position="139"/>
    </location>
</feature>
<gene>
    <name evidence="1" type="primary">nusB</name>
    <name type="ordered locus">LAF_1264</name>
</gene>
<accession>B2GD68</accession>
<dbReference type="EMBL" id="AP008937">
    <property type="protein sequence ID" value="BAG27600.1"/>
    <property type="molecule type" value="Genomic_DNA"/>
</dbReference>
<dbReference type="RefSeq" id="WP_012391456.1">
    <property type="nucleotide sequence ID" value="NC_010610.1"/>
</dbReference>
<dbReference type="SMR" id="B2GD68"/>
<dbReference type="KEGG" id="lfe:LAF_1264"/>
<dbReference type="PATRIC" id="fig|334390.5.peg.1387"/>
<dbReference type="eggNOG" id="COG0781">
    <property type="taxonomic scope" value="Bacteria"/>
</dbReference>
<dbReference type="HOGENOM" id="CLU_087843_3_2_9"/>
<dbReference type="Proteomes" id="UP000001697">
    <property type="component" value="Chromosome"/>
</dbReference>
<dbReference type="GO" id="GO:0005829">
    <property type="term" value="C:cytosol"/>
    <property type="evidence" value="ECO:0007669"/>
    <property type="project" value="TreeGrafter"/>
</dbReference>
<dbReference type="GO" id="GO:0003723">
    <property type="term" value="F:RNA binding"/>
    <property type="evidence" value="ECO:0007669"/>
    <property type="project" value="UniProtKB-UniRule"/>
</dbReference>
<dbReference type="GO" id="GO:0006353">
    <property type="term" value="P:DNA-templated transcription termination"/>
    <property type="evidence" value="ECO:0007669"/>
    <property type="project" value="UniProtKB-UniRule"/>
</dbReference>
<dbReference type="GO" id="GO:0031564">
    <property type="term" value="P:transcription antitermination"/>
    <property type="evidence" value="ECO:0007669"/>
    <property type="project" value="UniProtKB-KW"/>
</dbReference>
<dbReference type="Gene3D" id="1.10.940.10">
    <property type="entry name" value="NusB-like"/>
    <property type="match status" value="1"/>
</dbReference>
<dbReference type="HAMAP" id="MF_00073">
    <property type="entry name" value="NusB"/>
    <property type="match status" value="1"/>
</dbReference>
<dbReference type="InterPro" id="IPR035926">
    <property type="entry name" value="NusB-like_sf"/>
</dbReference>
<dbReference type="InterPro" id="IPR011605">
    <property type="entry name" value="NusB_fam"/>
</dbReference>
<dbReference type="InterPro" id="IPR006027">
    <property type="entry name" value="NusB_RsmB_TIM44"/>
</dbReference>
<dbReference type="NCBIfam" id="TIGR01951">
    <property type="entry name" value="nusB"/>
    <property type="match status" value="1"/>
</dbReference>
<dbReference type="NCBIfam" id="NF001223">
    <property type="entry name" value="PRK00202.1-1"/>
    <property type="match status" value="1"/>
</dbReference>
<dbReference type="PANTHER" id="PTHR11078:SF3">
    <property type="entry name" value="ANTITERMINATION NUSB DOMAIN-CONTAINING PROTEIN"/>
    <property type="match status" value="1"/>
</dbReference>
<dbReference type="PANTHER" id="PTHR11078">
    <property type="entry name" value="N UTILIZATION SUBSTANCE PROTEIN B-RELATED"/>
    <property type="match status" value="1"/>
</dbReference>
<dbReference type="Pfam" id="PF01029">
    <property type="entry name" value="NusB"/>
    <property type="match status" value="1"/>
</dbReference>
<dbReference type="SUPFAM" id="SSF48013">
    <property type="entry name" value="NusB-like"/>
    <property type="match status" value="1"/>
</dbReference>
<name>NUSB_LIMF3</name>
<sequence length="139" mass="15755">MTFKRRRIREVAFQTLFAMVSDPEVDREQLYKELLPLAPQEEVPAYLEELVTGVSEHQAEFDQEIEGSLAAGWSLSRVEKPNLIILRLALYEMKYVDDVPVAVAIDEALEMTKKFSDDKSRKFINGVLGHIGGPKTTSN</sequence>
<organism>
    <name type="scientific">Limosilactobacillus fermentum (strain NBRC 3956 / LMG 18251)</name>
    <name type="common">Lactobacillus fermentum</name>
    <dbReference type="NCBI Taxonomy" id="334390"/>
    <lineage>
        <taxon>Bacteria</taxon>
        <taxon>Bacillati</taxon>
        <taxon>Bacillota</taxon>
        <taxon>Bacilli</taxon>
        <taxon>Lactobacillales</taxon>
        <taxon>Lactobacillaceae</taxon>
        <taxon>Limosilactobacillus</taxon>
    </lineage>
</organism>
<comment type="function">
    <text evidence="1">Involved in transcription antitermination. Required for transcription of ribosomal RNA (rRNA) genes. Binds specifically to the boxA antiterminator sequence of the ribosomal RNA (rrn) operons.</text>
</comment>
<comment type="similarity">
    <text evidence="1">Belongs to the NusB family.</text>
</comment>
<protein>
    <recommendedName>
        <fullName evidence="1">Transcription antitermination protein NusB</fullName>
    </recommendedName>
    <alternativeName>
        <fullName evidence="1">Antitermination factor NusB</fullName>
    </alternativeName>
</protein>
<evidence type="ECO:0000255" key="1">
    <source>
        <dbReference type="HAMAP-Rule" id="MF_00073"/>
    </source>
</evidence>
<proteinExistence type="inferred from homology"/>